<evidence type="ECO:0000255" key="1">
    <source>
        <dbReference type="HAMAP-Rule" id="MF_00394"/>
    </source>
</evidence>
<comment type="function">
    <text evidence="1">Catalyzes the reduction of the glycolytic intermediate dihydroxyacetone phosphate (DHAP) to sn-glycerol 3-phosphate (G3P), the key precursor for phospholipid synthesis.</text>
</comment>
<comment type="catalytic activity">
    <reaction evidence="1">
        <text>sn-glycerol 3-phosphate + NAD(+) = dihydroxyacetone phosphate + NADH + H(+)</text>
        <dbReference type="Rhea" id="RHEA:11092"/>
        <dbReference type="ChEBI" id="CHEBI:15378"/>
        <dbReference type="ChEBI" id="CHEBI:57540"/>
        <dbReference type="ChEBI" id="CHEBI:57597"/>
        <dbReference type="ChEBI" id="CHEBI:57642"/>
        <dbReference type="ChEBI" id="CHEBI:57945"/>
        <dbReference type="EC" id="1.1.1.94"/>
    </reaction>
    <physiologicalReaction direction="right-to-left" evidence="1">
        <dbReference type="Rhea" id="RHEA:11094"/>
    </physiologicalReaction>
</comment>
<comment type="catalytic activity">
    <reaction evidence="1">
        <text>sn-glycerol 3-phosphate + NADP(+) = dihydroxyacetone phosphate + NADPH + H(+)</text>
        <dbReference type="Rhea" id="RHEA:11096"/>
        <dbReference type="ChEBI" id="CHEBI:15378"/>
        <dbReference type="ChEBI" id="CHEBI:57597"/>
        <dbReference type="ChEBI" id="CHEBI:57642"/>
        <dbReference type="ChEBI" id="CHEBI:57783"/>
        <dbReference type="ChEBI" id="CHEBI:58349"/>
        <dbReference type="EC" id="1.1.1.94"/>
    </reaction>
    <physiologicalReaction direction="right-to-left" evidence="1">
        <dbReference type="Rhea" id="RHEA:11098"/>
    </physiologicalReaction>
</comment>
<comment type="pathway">
    <text evidence="1">Membrane lipid metabolism; glycerophospholipid metabolism.</text>
</comment>
<comment type="subcellular location">
    <subcellularLocation>
        <location evidence="1">Cytoplasm</location>
    </subcellularLocation>
</comment>
<comment type="similarity">
    <text evidence="1">Belongs to the NAD-dependent glycerol-3-phosphate dehydrogenase family.</text>
</comment>
<reference key="1">
    <citation type="journal article" date="2009" name="PLoS Genet.">
        <title>Organised genome dynamics in the Escherichia coli species results in highly diverse adaptive paths.</title>
        <authorList>
            <person name="Touchon M."/>
            <person name="Hoede C."/>
            <person name="Tenaillon O."/>
            <person name="Barbe V."/>
            <person name="Baeriswyl S."/>
            <person name="Bidet P."/>
            <person name="Bingen E."/>
            <person name="Bonacorsi S."/>
            <person name="Bouchier C."/>
            <person name="Bouvet O."/>
            <person name="Calteau A."/>
            <person name="Chiapello H."/>
            <person name="Clermont O."/>
            <person name="Cruveiller S."/>
            <person name="Danchin A."/>
            <person name="Diard M."/>
            <person name="Dossat C."/>
            <person name="Karoui M.E."/>
            <person name="Frapy E."/>
            <person name="Garry L."/>
            <person name="Ghigo J.M."/>
            <person name="Gilles A.M."/>
            <person name="Johnson J."/>
            <person name="Le Bouguenec C."/>
            <person name="Lescat M."/>
            <person name="Mangenot S."/>
            <person name="Martinez-Jehanne V."/>
            <person name="Matic I."/>
            <person name="Nassif X."/>
            <person name="Oztas S."/>
            <person name="Petit M.A."/>
            <person name="Pichon C."/>
            <person name="Rouy Z."/>
            <person name="Ruf C.S."/>
            <person name="Schneider D."/>
            <person name="Tourret J."/>
            <person name="Vacherie B."/>
            <person name="Vallenet D."/>
            <person name="Medigue C."/>
            <person name="Rocha E.P.C."/>
            <person name="Denamur E."/>
        </authorList>
    </citation>
    <scope>NUCLEOTIDE SEQUENCE [LARGE SCALE GENOMIC DNA]</scope>
    <source>
        <strain>55989 / EAEC</strain>
    </source>
</reference>
<name>GPDA_ECO55</name>
<sequence length="339" mass="36362">MNQRNASMTVIGAGSYGTALAITLARNGHEVVLWGHDPEHIATLERDRCNAAFLPDVPFPDTLHLESDLATALAASRNILVVVPSHVFGEVLRQIKPLMRPDARLVWATKGLEAETGRLLQDVAREALGDQIPLAVISGPTFAKELAAGLPTAISLASTDQTFADDLQQLLHCGKSFRVYSNPDFIGVQLGGAVKNVIAIGAGMSDGIGFGANARTALITRGLAEMSRLGAALGADPATFMGMAGLGDLVLTCTDNQSRNRRFGMMLGQGMDVQSAQEKIGQVVEGYRNTKEVRELAHRFGVEMPITEEIYQVLYCGKNAREAALTLLGRARKDERSSH</sequence>
<feature type="chain" id="PRO_1000190139" description="Glycerol-3-phosphate dehydrogenase [NAD(P)+]">
    <location>
        <begin position="1"/>
        <end position="339"/>
    </location>
</feature>
<feature type="active site" description="Proton acceptor" evidence="1">
    <location>
        <position position="195"/>
    </location>
</feature>
<feature type="binding site" evidence="1">
    <location>
        <position position="15"/>
    </location>
    <ligand>
        <name>NADPH</name>
        <dbReference type="ChEBI" id="CHEBI:57783"/>
    </ligand>
</feature>
<feature type="binding site" evidence="1">
    <location>
        <position position="16"/>
    </location>
    <ligand>
        <name>NADPH</name>
        <dbReference type="ChEBI" id="CHEBI:57783"/>
    </ligand>
</feature>
<feature type="binding site" evidence="1">
    <location>
        <position position="36"/>
    </location>
    <ligand>
        <name>NADPH</name>
        <dbReference type="ChEBI" id="CHEBI:57783"/>
    </ligand>
</feature>
<feature type="binding site" evidence="1">
    <location>
        <position position="110"/>
    </location>
    <ligand>
        <name>NADPH</name>
        <dbReference type="ChEBI" id="CHEBI:57783"/>
    </ligand>
</feature>
<feature type="binding site" evidence="1">
    <location>
        <position position="110"/>
    </location>
    <ligand>
        <name>sn-glycerol 3-phosphate</name>
        <dbReference type="ChEBI" id="CHEBI:57597"/>
    </ligand>
</feature>
<feature type="binding site" evidence="1">
    <location>
        <position position="139"/>
    </location>
    <ligand>
        <name>sn-glycerol 3-phosphate</name>
        <dbReference type="ChEBI" id="CHEBI:57597"/>
    </ligand>
</feature>
<feature type="binding site" evidence="1">
    <location>
        <position position="141"/>
    </location>
    <ligand>
        <name>sn-glycerol 3-phosphate</name>
        <dbReference type="ChEBI" id="CHEBI:57597"/>
    </ligand>
</feature>
<feature type="binding site" evidence="1">
    <location>
        <position position="143"/>
    </location>
    <ligand>
        <name>NADPH</name>
        <dbReference type="ChEBI" id="CHEBI:57783"/>
    </ligand>
</feature>
<feature type="binding site" evidence="1">
    <location>
        <position position="195"/>
    </location>
    <ligand>
        <name>sn-glycerol 3-phosphate</name>
        <dbReference type="ChEBI" id="CHEBI:57597"/>
    </ligand>
</feature>
<feature type="binding site" evidence="1">
    <location>
        <position position="248"/>
    </location>
    <ligand>
        <name>sn-glycerol 3-phosphate</name>
        <dbReference type="ChEBI" id="CHEBI:57597"/>
    </ligand>
</feature>
<feature type="binding site" evidence="1">
    <location>
        <position position="258"/>
    </location>
    <ligand>
        <name>sn-glycerol 3-phosphate</name>
        <dbReference type="ChEBI" id="CHEBI:57597"/>
    </ligand>
</feature>
<feature type="binding site" evidence="1">
    <location>
        <position position="259"/>
    </location>
    <ligand>
        <name>NADPH</name>
        <dbReference type="ChEBI" id="CHEBI:57783"/>
    </ligand>
</feature>
<feature type="binding site" evidence="1">
    <location>
        <position position="259"/>
    </location>
    <ligand>
        <name>sn-glycerol 3-phosphate</name>
        <dbReference type="ChEBI" id="CHEBI:57597"/>
    </ligand>
</feature>
<feature type="binding site" evidence="1">
    <location>
        <position position="260"/>
    </location>
    <ligand>
        <name>sn-glycerol 3-phosphate</name>
        <dbReference type="ChEBI" id="CHEBI:57597"/>
    </ligand>
</feature>
<feature type="binding site" evidence="1">
    <location>
        <position position="283"/>
    </location>
    <ligand>
        <name>NADPH</name>
        <dbReference type="ChEBI" id="CHEBI:57783"/>
    </ligand>
</feature>
<feature type="binding site" evidence="1">
    <location>
        <position position="285"/>
    </location>
    <ligand>
        <name>NADPH</name>
        <dbReference type="ChEBI" id="CHEBI:57783"/>
    </ligand>
</feature>
<organism>
    <name type="scientific">Escherichia coli (strain 55989 / EAEC)</name>
    <dbReference type="NCBI Taxonomy" id="585055"/>
    <lineage>
        <taxon>Bacteria</taxon>
        <taxon>Pseudomonadati</taxon>
        <taxon>Pseudomonadota</taxon>
        <taxon>Gammaproteobacteria</taxon>
        <taxon>Enterobacterales</taxon>
        <taxon>Enterobacteriaceae</taxon>
        <taxon>Escherichia</taxon>
    </lineage>
</organism>
<protein>
    <recommendedName>
        <fullName evidence="1">Glycerol-3-phosphate dehydrogenase [NAD(P)+]</fullName>
        <ecNumber evidence="1">1.1.1.94</ecNumber>
    </recommendedName>
    <alternativeName>
        <fullName evidence="1">NAD(P)(+)-dependent glycerol-3-phosphate dehydrogenase</fullName>
    </alternativeName>
    <alternativeName>
        <fullName evidence="1">NAD(P)H-dependent dihydroxyacetone-phosphate reductase</fullName>
    </alternativeName>
</protein>
<keyword id="KW-0963">Cytoplasm</keyword>
<keyword id="KW-0444">Lipid biosynthesis</keyword>
<keyword id="KW-0443">Lipid metabolism</keyword>
<keyword id="KW-0520">NAD</keyword>
<keyword id="KW-0521">NADP</keyword>
<keyword id="KW-0547">Nucleotide-binding</keyword>
<keyword id="KW-0560">Oxidoreductase</keyword>
<keyword id="KW-0594">Phospholipid biosynthesis</keyword>
<keyword id="KW-1208">Phospholipid metabolism</keyword>
<keyword id="KW-1185">Reference proteome</keyword>
<gene>
    <name evidence="1" type="primary">gpsA</name>
    <name type="ordered locus">EC55989_4075</name>
</gene>
<proteinExistence type="inferred from homology"/>
<accession>B7L734</accession>
<dbReference type="EC" id="1.1.1.94" evidence="1"/>
<dbReference type="EMBL" id="CU928145">
    <property type="protein sequence ID" value="CAV00595.1"/>
    <property type="molecule type" value="Genomic_DNA"/>
</dbReference>
<dbReference type="RefSeq" id="WP_001076194.1">
    <property type="nucleotide sequence ID" value="NZ_CP028304.1"/>
</dbReference>
<dbReference type="SMR" id="B7L734"/>
<dbReference type="GeneID" id="93778322"/>
<dbReference type="KEGG" id="eck:EC55989_4075"/>
<dbReference type="HOGENOM" id="CLU_033449_0_2_6"/>
<dbReference type="UniPathway" id="UPA00940"/>
<dbReference type="Proteomes" id="UP000000746">
    <property type="component" value="Chromosome"/>
</dbReference>
<dbReference type="GO" id="GO:0005829">
    <property type="term" value="C:cytosol"/>
    <property type="evidence" value="ECO:0007669"/>
    <property type="project" value="TreeGrafter"/>
</dbReference>
<dbReference type="GO" id="GO:0047952">
    <property type="term" value="F:glycerol-3-phosphate dehydrogenase [NAD(P)+] activity"/>
    <property type="evidence" value="ECO:0007669"/>
    <property type="project" value="UniProtKB-UniRule"/>
</dbReference>
<dbReference type="GO" id="GO:0051287">
    <property type="term" value="F:NAD binding"/>
    <property type="evidence" value="ECO:0007669"/>
    <property type="project" value="InterPro"/>
</dbReference>
<dbReference type="GO" id="GO:0005975">
    <property type="term" value="P:carbohydrate metabolic process"/>
    <property type="evidence" value="ECO:0007669"/>
    <property type="project" value="InterPro"/>
</dbReference>
<dbReference type="GO" id="GO:0046167">
    <property type="term" value="P:glycerol-3-phosphate biosynthetic process"/>
    <property type="evidence" value="ECO:0007669"/>
    <property type="project" value="UniProtKB-UniRule"/>
</dbReference>
<dbReference type="GO" id="GO:0046168">
    <property type="term" value="P:glycerol-3-phosphate catabolic process"/>
    <property type="evidence" value="ECO:0007669"/>
    <property type="project" value="InterPro"/>
</dbReference>
<dbReference type="GO" id="GO:0046474">
    <property type="term" value="P:glycerophospholipid biosynthetic process"/>
    <property type="evidence" value="ECO:0007669"/>
    <property type="project" value="TreeGrafter"/>
</dbReference>
<dbReference type="FunFam" id="1.10.1040.10:FF:000001">
    <property type="entry name" value="Glycerol-3-phosphate dehydrogenase [NAD(P)+]"/>
    <property type="match status" value="1"/>
</dbReference>
<dbReference type="FunFam" id="3.40.50.720:FF:000019">
    <property type="entry name" value="Glycerol-3-phosphate dehydrogenase [NAD(P)+]"/>
    <property type="match status" value="1"/>
</dbReference>
<dbReference type="Gene3D" id="1.10.1040.10">
    <property type="entry name" value="N-(1-d-carboxylethyl)-l-norvaline Dehydrogenase, domain 2"/>
    <property type="match status" value="1"/>
</dbReference>
<dbReference type="Gene3D" id="3.40.50.720">
    <property type="entry name" value="NAD(P)-binding Rossmann-like Domain"/>
    <property type="match status" value="1"/>
</dbReference>
<dbReference type="HAMAP" id="MF_00394">
    <property type="entry name" value="NAD_Glyc3P_dehydrog"/>
    <property type="match status" value="1"/>
</dbReference>
<dbReference type="InterPro" id="IPR008927">
    <property type="entry name" value="6-PGluconate_DH-like_C_sf"/>
</dbReference>
<dbReference type="InterPro" id="IPR013328">
    <property type="entry name" value="6PGD_dom2"/>
</dbReference>
<dbReference type="InterPro" id="IPR006168">
    <property type="entry name" value="G3P_DH_NAD-dep"/>
</dbReference>
<dbReference type="InterPro" id="IPR006109">
    <property type="entry name" value="G3P_DH_NAD-dep_C"/>
</dbReference>
<dbReference type="InterPro" id="IPR011128">
    <property type="entry name" value="G3P_DH_NAD-dep_N"/>
</dbReference>
<dbReference type="InterPro" id="IPR036291">
    <property type="entry name" value="NAD(P)-bd_dom_sf"/>
</dbReference>
<dbReference type="NCBIfam" id="NF000939">
    <property type="entry name" value="PRK00094.1-1"/>
    <property type="match status" value="1"/>
</dbReference>
<dbReference type="NCBIfam" id="NF000940">
    <property type="entry name" value="PRK00094.1-2"/>
    <property type="match status" value="1"/>
</dbReference>
<dbReference type="NCBIfam" id="NF000942">
    <property type="entry name" value="PRK00094.1-4"/>
    <property type="match status" value="1"/>
</dbReference>
<dbReference type="PANTHER" id="PTHR11728">
    <property type="entry name" value="GLYCEROL-3-PHOSPHATE DEHYDROGENASE"/>
    <property type="match status" value="1"/>
</dbReference>
<dbReference type="PANTHER" id="PTHR11728:SF1">
    <property type="entry name" value="GLYCEROL-3-PHOSPHATE DEHYDROGENASE [NAD(+)] 2, CHLOROPLASTIC"/>
    <property type="match status" value="1"/>
</dbReference>
<dbReference type="Pfam" id="PF07479">
    <property type="entry name" value="NAD_Gly3P_dh_C"/>
    <property type="match status" value="1"/>
</dbReference>
<dbReference type="Pfam" id="PF01210">
    <property type="entry name" value="NAD_Gly3P_dh_N"/>
    <property type="match status" value="1"/>
</dbReference>
<dbReference type="PIRSF" id="PIRSF000114">
    <property type="entry name" value="Glycerol-3-P_dh"/>
    <property type="match status" value="1"/>
</dbReference>
<dbReference type="PRINTS" id="PR00077">
    <property type="entry name" value="GPDHDRGNASE"/>
</dbReference>
<dbReference type="SUPFAM" id="SSF48179">
    <property type="entry name" value="6-phosphogluconate dehydrogenase C-terminal domain-like"/>
    <property type="match status" value="1"/>
</dbReference>
<dbReference type="SUPFAM" id="SSF51735">
    <property type="entry name" value="NAD(P)-binding Rossmann-fold domains"/>
    <property type="match status" value="1"/>
</dbReference>
<dbReference type="PROSITE" id="PS00957">
    <property type="entry name" value="NAD_G3PDH"/>
    <property type="match status" value="1"/>
</dbReference>